<dbReference type="EC" id="6.1.1.20" evidence="4"/>
<dbReference type="EMBL" id="CR857259">
    <property type="protein sequence ID" value="CAH89555.1"/>
    <property type="molecule type" value="mRNA"/>
</dbReference>
<dbReference type="RefSeq" id="NP_001127167.1">
    <property type="nucleotide sequence ID" value="NM_001133695.2"/>
</dbReference>
<dbReference type="SMR" id="Q5RFA2"/>
<dbReference type="FunCoup" id="Q5RFA2">
    <property type="interactions" value="2463"/>
</dbReference>
<dbReference type="STRING" id="9601.ENSPPYP00000010779"/>
<dbReference type="GeneID" id="100174218"/>
<dbReference type="KEGG" id="pon:100174218"/>
<dbReference type="CTD" id="2193"/>
<dbReference type="eggNOG" id="KOG2784">
    <property type="taxonomic scope" value="Eukaryota"/>
</dbReference>
<dbReference type="HOGENOM" id="CLU_025086_2_2_1"/>
<dbReference type="InParanoid" id="Q5RFA2"/>
<dbReference type="OrthoDB" id="238316at2759"/>
<dbReference type="TreeFam" id="TF300647"/>
<dbReference type="Proteomes" id="UP000001595">
    <property type="component" value="Chromosome 19"/>
</dbReference>
<dbReference type="GO" id="GO:0005737">
    <property type="term" value="C:cytoplasm"/>
    <property type="evidence" value="ECO:0000250"/>
    <property type="project" value="UniProtKB"/>
</dbReference>
<dbReference type="GO" id="GO:0005829">
    <property type="term" value="C:cytosol"/>
    <property type="evidence" value="ECO:0007669"/>
    <property type="project" value="TreeGrafter"/>
</dbReference>
<dbReference type="GO" id="GO:0009328">
    <property type="term" value="C:phenylalanine-tRNA ligase complex"/>
    <property type="evidence" value="ECO:0000250"/>
    <property type="project" value="UniProtKB"/>
</dbReference>
<dbReference type="GO" id="GO:0005524">
    <property type="term" value="F:ATP binding"/>
    <property type="evidence" value="ECO:0007669"/>
    <property type="project" value="UniProtKB-KW"/>
</dbReference>
<dbReference type="GO" id="GO:0000287">
    <property type="term" value="F:magnesium ion binding"/>
    <property type="evidence" value="ECO:0000250"/>
    <property type="project" value="UniProtKB"/>
</dbReference>
<dbReference type="GO" id="GO:0004826">
    <property type="term" value="F:phenylalanine-tRNA ligase activity"/>
    <property type="evidence" value="ECO:0000250"/>
    <property type="project" value="UniProtKB"/>
</dbReference>
<dbReference type="GO" id="GO:0000049">
    <property type="term" value="F:tRNA binding"/>
    <property type="evidence" value="ECO:0007669"/>
    <property type="project" value="InterPro"/>
</dbReference>
<dbReference type="GO" id="GO:0006432">
    <property type="term" value="P:phenylalanyl-tRNA aminoacylation"/>
    <property type="evidence" value="ECO:0000250"/>
    <property type="project" value="UniProtKB"/>
</dbReference>
<dbReference type="GO" id="GO:0051290">
    <property type="term" value="P:protein heterotetramerization"/>
    <property type="evidence" value="ECO:0000250"/>
    <property type="project" value="UniProtKB"/>
</dbReference>
<dbReference type="CDD" id="cd00496">
    <property type="entry name" value="PheRS_alpha_core"/>
    <property type="match status" value="1"/>
</dbReference>
<dbReference type="FunFam" id="1.10.10.2320:FF:000001">
    <property type="entry name" value="phenylalanine--tRNA ligase alpha subunit"/>
    <property type="match status" value="1"/>
</dbReference>
<dbReference type="FunFam" id="1.10.10.2330:FF:000001">
    <property type="entry name" value="phenylalanine--tRNA ligase alpha subunit"/>
    <property type="match status" value="1"/>
</dbReference>
<dbReference type="FunFam" id="3.30.1370.240:FF:000002">
    <property type="entry name" value="phenylalanine--tRNA ligase alpha subunit"/>
    <property type="match status" value="1"/>
</dbReference>
<dbReference type="FunFam" id="3.30.930.10:FF:000036">
    <property type="entry name" value="phenylalanine--tRNA ligase alpha subunit"/>
    <property type="match status" value="1"/>
</dbReference>
<dbReference type="Gene3D" id="1.10.10.2320">
    <property type="match status" value="1"/>
</dbReference>
<dbReference type="Gene3D" id="1.10.10.2330">
    <property type="match status" value="1"/>
</dbReference>
<dbReference type="Gene3D" id="3.30.1370.240">
    <property type="match status" value="1"/>
</dbReference>
<dbReference type="Gene3D" id="3.30.930.10">
    <property type="entry name" value="Bira Bifunctional Protein, Domain 2"/>
    <property type="match status" value="1"/>
</dbReference>
<dbReference type="InterPro" id="IPR006195">
    <property type="entry name" value="aa-tRNA-synth_II"/>
</dbReference>
<dbReference type="InterPro" id="IPR045864">
    <property type="entry name" value="aa-tRNA-synth_II/BPL/LPL"/>
</dbReference>
<dbReference type="InterPro" id="IPR004529">
    <property type="entry name" value="Phe-tRNA-synth_IIc_asu"/>
</dbReference>
<dbReference type="InterPro" id="IPR002319">
    <property type="entry name" value="Phenylalanyl-tRNA_Synthase"/>
</dbReference>
<dbReference type="InterPro" id="IPR040724">
    <property type="entry name" value="PheRS_DBD1"/>
</dbReference>
<dbReference type="InterPro" id="IPR040586">
    <property type="entry name" value="PheRS_DBD2"/>
</dbReference>
<dbReference type="InterPro" id="IPR040725">
    <property type="entry name" value="PheRS_DBD3"/>
</dbReference>
<dbReference type="InterPro" id="IPR036390">
    <property type="entry name" value="WH_DNA-bd_sf"/>
</dbReference>
<dbReference type="NCBIfam" id="TIGR00468">
    <property type="entry name" value="pheS"/>
    <property type="match status" value="1"/>
</dbReference>
<dbReference type="NCBIfam" id="NF003210">
    <property type="entry name" value="PRK04172.1"/>
    <property type="match status" value="1"/>
</dbReference>
<dbReference type="PANTHER" id="PTHR11538:SF40">
    <property type="entry name" value="PHENYLALANINE--TRNA LIGASE ALPHA SUBUNIT"/>
    <property type="match status" value="1"/>
</dbReference>
<dbReference type="PANTHER" id="PTHR11538">
    <property type="entry name" value="PHENYLALANYL-TRNA SYNTHETASE"/>
    <property type="match status" value="1"/>
</dbReference>
<dbReference type="Pfam" id="PF18552">
    <property type="entry name" value="PheRS_DBD1"/>
    <property type="match status" value="1"/>
</dbReference>
<dbReference type="Pfam" id="PF18554">
    <property type="entry name" value="PheRS_DBD2"/>
    <property type="match status" value="1"/>
</dbReference>
<dbReference type="Pfam" id="PF18553">
    <property type="entry name" value="PheRS_DBD3"/>
    <property type="match status" value="1"/>
</dbReference>
<dbReference type="Pfam" id="PF01409">
    <property type="entry name" value="tRNA-synt_2d"/>
    <property type="match status" value="1"/>
</dbReference>
<dbReference type="SUPFAM" id="SSF55681">
    <property type="entry name" value="Class II aaRS and biotin synthetases"/>
    <property type="match status" value="1"/>
</dbReference>
<dbReference type="SUPFAM" id="SSF46785">
    <property type="entry name" value="Winged helix' DNA-binding domain"/>
    <property type="match status" value="1"/>
</dbReference>
<dbReference type="PROSITE" id="PS50862">
    <property type="entry name" value="AA_TRNA_LIGASE_II"/>
    <property type="match status" value="1"/>
</dbReference>
<accession>Q5RFA2</accession>
<comment type="catalytic activity">
    <reaction evidence="4">
        <text>tRNA(Phe) + L-phenylalanine + ATP = L-phenylalanyl-tRNA(Phe) + AMP + diphosphate + H(+)</text>
        <dbReference type="Rhea" id="RHEA:19413"/>
        <dbReference type="Rhea" id="RHEA-COMP:9668"/>
        <dbReference type="Rhea" id="RHEA-COMP:9699"/>
        <dbReference type="ChEBI" id="CHEBI:15378"/>
        <dbReference type="ChEBI" id="CHEBI:30616"/>
        <dbReference type="ChEBI" id="CHEBI:33019"/>
        <dbReference type="ChEBI" id="CHEBI:58095"/>
        <dbReference type="ChEBI" id="CHEBI:78442"/>
        <dbReference type="ChEBI" id="CHEBI:78531"/>
        <dbReference type="ChEBI" id="CHEBI:456215"/>
        <dbReference type="EC" id="6.1.1.20"/>
    </reaction>
    <physiologicalReaction direction="left-to-right" evidence="4">
        <dbReference type="Rhea" id="RHEA:19414"/>
    </physiologicalReaction>
</comment>
<comment type="cofactor">
    <cofactor evidence="1">
        <name>Mg(2+)</name>
        <dbReference type="ChEBI" id="CHEBI:18420"/>
    </cofactor>
</comment>
<comment type="subunit">
    <text evidence="4">Heterotetramer; dimer of two heterodimers formed by FARSA and FARSB.</text>
</comment>
<comment type="subcellular location">
    <subcellularLocation>
        <location evidence="2">Cytoplasm</location>
    </subcellularLocation>
</comment>
<comment type="similarity">
    <text evidence="5">Belongs to the class-II aminoacyl-tRNA synthetase family. Phe-tRNA synthetase alpha subunit type 2 subfamily.</text>
</comment>
<name>SYFA_PONAB</name>
<organism>
    <name type="scientific">Pongo abelii</name>
    <name type="common">Sumatran orangutan</name>
    <name type="synonym">Pongo pygmaeus abelii</name>
    <dbReference type="NCBI Taxonomy" id="9601"/>
    <lineage>
        <taxon>Eukaryota</taxon>
        <taxon>Metazoa</taxon>
        <taxon>Chordata</taxon>
        <taxon>Craniata</taxon>
        <taxon>Vertebrata</taxon>
        <taxon>Euteleostomi</taxon>
        <taxon>Mammalia</taxon>
        <taxon>Eutheria</taxon>
        <taxon>Euarchontoglires</taxon>
        <taxon>Primates</taxon>
        <taxon>Haplorrhini</taxon>
        <taxon>Catarrhini</taxon>
        <taxon>Hominidae</taxon>
        <taxon>Pongo</taxon>
    </lineage>
</organism>
<sequence length="508" mass="57564">MADGPVAELLLRRLEASDGGLDSAELAAELGMEHQAVVGAVKSLQALGEVIEAELRSTKRWELTAEGEEIAREGSHEARVFRSIPPEGLAQSELMRLPSGKVGFSKAMSNKWIRVDKSAADGPRVFRVVDSMEDEVQRRLQLVRGGQAEKLGEKERSELRKRKLLAEVILKTYWVSKGSAFSTSISKQETELSPEMISSGSWRDRPFKPYNFLAHGVLPDSGHLHPLLKVRSQFRQIFLEMGFTEMPTDNFIESSFWNFDALFQPQQHPARDQHDTFFLRDPAEALQLPMDYVQRVKRTHSQGGYGSQGYKYNWKLDEARKNLLRTHTTSASARALYRLAQKKPFTPVKYFSIDRVFRNETLDATHLAEFHQIEGVVADHGLTLGHLMGVLREFFTKLGITQLRFKPAYNPYTEPSMEVFSYHQGLKKWVEVGNSGVFRPEMLLPMGLPENVSVIAWGLSLERPTMIKYGINNIRELVGHKVNLQMVYDSPLCRLDAEPRPPPTQEAA</sequence>
<evidence type="ECO:0000250" key="1">
    <source>
        <dbReference type="UniProtKB" id="A5K9S0"/>
    </source>
</evidence>
<evidence type="ECO:0000250" key="2">
    <source>
        <dbReference type="UniProtKB" id="Q505J8"/>
    </source>
</evidence>
<evidence type="ECO:0000250" key="3">
    <source>
        <dbReference type="UniProtKB" id="Q8C0C7"/>
    </source>
</evidence>
<evidence type="ECO:0000250" key="4">
    <source>
        <dbReference type="UniProtKB" id="Q9Y285"/>
    </source>
</evidence>
<evidence type="ECO:0000305" key="5"/>
<keyword id="KW-0007">Acetylation</keyword>
<keyword id="KW-0030">Aminoacyl-tRNA synthetase</keyword>
<keyword id="KW-0067">ATP-binding</keyword>
<keyword id="KW-0963">Cytoplasm</keyword>
<keyword id="KW-0436">Ligase</keyword>
<keyword id="KW-0460">Magnesium</keyword>
<keyword id="KW-0479">Metal-binding</keyword>
<keyword id="KW-0547">Nucleotide-binding</keyword>
<keyword id="KW-0597">Phosphoprotein</keyword>
<keyword id="KW-0648">Protein biosynthesis</keyword>
<keyword id="KW-1185">Reference proteome</keyword>
<feature type="initiator methionine" description="Removed" evidence="4">
    <location>
        <position position="1"/>
    </location>
</feature>
<feature type="chain" id="PRO_0000280448" description="Phenylalanine--tRNA ligase alpha subunit">
    <location>
        <begin position="2"/>
        <end position="508"/>
    </location>
</feature>
<feature type="binding site" evidence="4">
    <location>
        <position position="329"/>
    </location>
    <ligand>
        <name>L-phenylalanine</name>
        <dbReference type="ChEBI" id="CHEBI:58095"/>
    </ligand>
</feature>
<feature type="binding site" evidence="4">
    <location>
        <begin position="372"/>
        <end position="374"/>
    </location>
    <ligand>
        <name>L-phenylalanine</name>
        <dbReference type="ChEBI" id="CHEBI:58095"/>
    </ligand>
</feature>
<feature type="binding site" evidence="4">
    <location>
        <position position="412"/>
    </location>
    <ligand>
        <name>L-phenylalanine</name>
        <dbReference type="ChEBI" id="CHEBI:58095"/>
    </ligand>
</feature>
<feature type="binding site" evidence="1">
    <location>
        <position position="414"/>
    </location>
    <ligand>
        <name>Mg(2+)</name>
        <dbReference type="ChEBI" id="CHEBI:18420"/>
        <note>shared with beta subunit</note>
    </ligand>
</feature>
<feature type="binding site" evidence="4">
    <location>
        <position position="438"/>
    </location>
    <ligand>
        <name>L-phenylalanine</name>
        <dbReference type="ChEBI" id="CHEBI:58095"/>
    </ligand>
</feature>
<feature type="modified residue" description="N-acetylalanine" evidence="4">
    <location>
        <position position="2"/>
    </location>
</feature>
<feature type="modified residue" description="Phosphothreonine" evidence="4">
    <location>
        <position position="190"/>
    </location>
</feature>
<feature type="modified residue" description="Phosphoserine" evidence="4">
    <location>
        <position position="193"/>
    </location>
</feature>
<feature type="modified residue" description="Phosphoserine" evidence="3">
    <location>
        <position position="301"/>
    </location>
</feature>
<feature type="modified residue" description="N6-acetyllysine" evidence="4">
    <location>
        <position position="311"/>
    </location>
</feature>
<protein>
    <recommendedName>
        <fullName>Phenylalanine--tRNA ligase alpha subunit</fullName>
        <ecNumber evidence="4">6.1.1.20</ecNumber>
    </recommendedName>
    <alternativeName>
        <fullName>Phenylalanyl-tRNA synthetase alpha subunit</fullName>
        <shortName>PheRS</shortName>
    </alternativeName>
</protein>
<gene>
    <name type="primary">FARSA</name>
    <name type="synonym">FARSLA</name>
</gene>
<reference key="1">
    <citation type="submission" date="2004-11" db="EMBL/GenBank/DDBJ databases">
        <authorList>
            <consortium name="The German cDNA consortium"/>
        </authorList>
    </citation>
    <scope>NUCLEOTIDE SEQUENCE [LARGE SCALE MRNA]</scope>
    <source>
        <tissue>Kidney</tissue>
    </source>
</reference>
<proteinExistence type="evidence at transcript level"/>